<organism>
    <name type="scientific">Yersinia pestis</name>
    <dbReference type="NCBI Taxonomy" id="632"/>
    <lineage>
        <taxon>Bacteria</taxon>
        <taxon>Pseudomonadati</taxon>
        <taxon>Pseudomonadota</taxon>
        <taxon>Gammaproteobacteria</taxon>
        <taxon>Enterobacterales</taxon>
        <taxon>Yersiniaceae</taxon>
        <taxon>Yersinia</taxon>
    </lineage>
</organism>
<comment type="function">
    <text evidence="1 2 4 8">ATPase component of the type III secretion system (T3SS), also called injectisome, which is used to inject bacterial effector proteins into eukaryotic host cells (PubMed:21611119). Acts as a molecular motor to provide the energy that is required for the export of proteins (Probable). Required for type III secretion apparatus (T3SA) formation, proper protein secretion, host cell invasion and virulence (By similarity). May play a critical role in T3SS substrate recognition, disassembly of the effector/chaperone complex and unfolding of the effector in an ATP-dependent manner prior to secretion (By similarity).</text>
</comment>
<comment type="catalytic activity">
    <reaction evidence="8">
        <text>ATP + H2O + cellular proteinSide 1 = ADP + phosphate + cellular proteinSide 2.</text>
        <dbReference type="EC" id="7.4.2.8"/>
    </reaction>
</comment>
<comment type="activity regulation">
    <text evidence="4">ATPase activity and YopE secretion are inhibited by selected small-molecule ATPase inhibitors.</text>
</comment>
<comment type="subunit">
    <text evidence="3">The core secretion machinery of the T3SS is composed of approximately 20 different proteins, including cytoplasmic components, a base, an export apparatus and a needle (By similarity). This subunit is part of the cytosolic complex (By similarity). Forms homohexamers (By similarity).</text>
</comment>
<comment type="subcellular location">
    <subcellularLocation>
        <location evidence="3">Cytoplasm</location>
    </subcellularLocation>
</comment>
<comment type="disruption phenotype">
    <text evidence="4 5">Deletion of the gene does not affect the growth rate but causes total attenuation of the pathogen in a mouse model of bubonic plague (PubMed:21611119). Deletion mutant is not able to secrete the virulence-associated V antigen (LcrV) and is attenuated in a subcutaneous model of plague (PubMed:22537022).</text>
</comment>
<comment type="biotechnology">
    <text evidence="5">Deletion mutant may function as an attenuated, genetically engineered, live vaccine effective against bubonic plague. Mice vaccinated twice with this mutant at varying doses are protected against bubonic plague in a dose-dependent manner.</text>
</comment>
<comment type="similarity">
    <text evidence="7">Belongs to the ATPase alpha/beta chains family. T3SS ATPase subfamily.</text>
</comment>
<accession>Q7ARI8</accession>
<accession>A0A0H2W055</accession>
<accession>A0A384L914</accession>
<accession>A0A3N4BJZ3</accession>
<accession>Q74YX5</accession>
<accession>Q7BTX3</accession>
<evidence type="ECO:0000250" key="1">
    <source>
        <dbReference type="UniProtKB" id="P0A1B9"/>
    </source>
</evidence>
<evidence type="ECO:0000250" key="2">
    <source>
        <dbReference type="UniProtKB" id="P0A1C1"/>
    </source>
</evidence>
<evidence type="ECO:0000250" key="3">
    <source>
        <dbReference type="UniProtKB" id="P40290"/>
    </source>
</evidence>
<evidence type="ECO:0000269" key="4">
    <source>
    </source>
</evidence>
<evidence type="ECO:0000269" key="5">
    <source>
    </source>
</evidence>
<evidence type="ECO:0000303" key="6">
    <source>
    </source>
</evidence>
<evidence type="ECO:0000305" key="7"/>
<evidence type="ECO:0000305" key="8">
    <source>
    </source>
</evidence>
<evidence type="ECO:0000312" key="9">
    <source>
        <dbReference type="EMBL" id="AAC69791.1"/>
    </source>
</evidence>
<evidence type="ECO:0000312" key="10">
    <source>
        <dbReference type="EMBL" id="CAB54917.1"/>
    </source>
</evidence>
<evidence type="ECO:0000312" key="11">
    <source>
        <dbReference type="Proteomes" id="UP000000815"/>
    </source>
</evidence>
<protein>
    <recommendedName>
        <fullName evidence="6">Type 3 secretion system ATPase</fullName>
        <shortName evidence="6">T3SS ATPase</shortName>
        <ecNumber evidence="8">7.4.2.8</ecNumber>
    </recommendedName>
</protein>
<keyword id="KW-0067">ATP-binding</keyword>
<keyword id="KW-0963">Cytoplasm</keyword>
<keyword id="KW-0547">Nucleotide-binding</keyword>
<keyword id="KW-0614">Plasmid</keyword>
<keyword id="KW-0653">Protein transport</keyword>
<keyword id="KW-1185">Reference proteome</keyword>
<keyword id="KW-1278">Translocase</keyword>
<keyword id="KW-0813">Transport</keyword>
<keyword id="KW-0843">Virulence</keyword>
<feature type="chain" id="PRO_0000452669" description="Type 3 secretion system ATPase">
    <location>
        <begin position="1"/>
        <end position="439"/>
    </location>
</feature>
<feature type="binding site" evidence="2">
    <location>
        <begin position="172"/>
        <end position="177"/>
    </location>
    <ligand>
        <name>ATP</name>
        <dbReference type="ChEBI" id="CHEBI:30616"/>
    </ligand>
</feature>
<sequence length="439" mass="47801">MLSLDQIPHHIRHGIVGSRLIQIRGRVTQVTGTLLKAVVPGVRIGELCYLRNPDNSLSLQAEVIGFAQHQALLIPLGEMYGISSNTEVSPTGTMHQVGVGEHLLGQVLDGLGQPFDGGHLPEPAAWYPVYQDAPAPMSRKLITTPLSLGIRVIDGLLTCGEGQRMGIFAAAGGGKSTLLASLIRSAEVDVTVLALIGERGREVREFIESDLGEEGLRKAVLVVATSDRPSMERAKAGFVATSIAEYFRDQGKRVLLLMDSVTRFARAQREIGLAAGEPPTRRGYPPSVFAALPRLMERAGQSSKGSITALYTVLVEGDDMTEPVADETRSILDGHIILSRKLAAANHYPAIDVLRSASRVMNQIVSKEHKTWAGDLRRLLAKYEEVELLLQIGEYQKGQDKEADQAIERMGAIRGWLCQGTHELSHFNETLNLLETLTQ</sequence>
<reference key="1">
    <citation type="journal article" date="1998" name="Infect. Immun.">
        <title>DNA sequencing and analysis of the low-Ca2+-response plasmid pCD1 of Yersinia pestis KIM5.</title>
        <authorList>
            <person name="Perry R.D."/>
            <person name="Straley S.C."/>
            <person name="Fetherston J.D."/>
            <person name="Rose D.J."/>
            <person name="Gregor J."/>
            <person name="Blattner F.R."/>
        </authorList>
    </citation>
    <scope>NUCLEOTIDE SEQUENCE [GENOMIC DNA]</scope>
    <source>
        <strain>KIM5 / Biovar Mediaevalis</strain>
    </source>
</reference>
<reference key="2">
    <citation type="journal article" date="1998" name="J. Bacteriol.">
        <title>Structural organization of virulence-associated plasmids of Yersinia pestis.</title>
        <authorList>
            <person name="Hu P."/>
            <person name="Elliott J."/>
            <person name="McCready P."/>
            <person name="Skowronski E."/>
            <person name="Garnes J."/>
            <person name="Kobayashi A."/>
            <person name="Brubaker R.R."/>
            <person name="Garcia E."/>
        </authorList>
    </citation>
    <scope>NUCLEOTIDE SEQUENCE [GENOMIC DNA]</scope>
    <source>
        <strain>KIM5 / Biovar Mediaevalis</strain>
    </source>
</reference>
<reference key="3">
    <citation type="journal article" date="2001" name="Nature">
        <title>Genome sequence of Yersinia pestis, the causative agent of plague.</title>
        <authorList>
            <person name="Parkhill J."/>
            <person name="Wren B.W."/>
            <person name="Thomson N.R."/>
            <person name="Titball R.W."/>
            <person name="Holden M.T.G."/>
            <person name="Prentice M.B."/>
            <person name="Sebaihia M."/>
            <person name="James K.D."/>
            <person name="Churcher C.M."/>
            <person name="Mungall K.L."/>
            <person name="Baker S."/>
            <person name="Basham D."/>
            <person name="Bentley S.D."/>
            <person name="Brooks K."/>
            <person name="Cerdeno-Tarraga A.-M."/>
            <person name="Chillingworth T."/>
            <person name="Cronin A."/>
            <person name="Davies R.M."/>
            <person name="Davis P."/>
            <person name="Dougan G."/>
            <person name="Feltwell T."/>
            <person name="Hamlin N."/>
            <person name="Holroyd S."/>
            <person name="Jagels K."/>
            <person name="Karlyshev A.V."/>
            <person name="Leather S."/>
            <person name="Moule S."/>
            <person name="Oyston P.C.F."/>
            <person name="Quail M.A."/>
            <person name="Rutherford K.M."/>
            <person name="Simmonds M."/>
            <person name="Skelton J."/>
            <person name="Stevens K."/>
            <person name="Whitehead S."/>
            <person name="Barrell B.G."/>
        </authorList>
    </citation>
    <scope>NUCLEOTIDE SEQUENCE [LARGE SCALE GENOMIC DNA]</scope>
    <source>
        <strain>CO-92 / Biovar Orientalis</strain>
    </source>
</reference>
<reference key="4">
    <citation type="journal article" date="2011" name="PLoS ONE">
        <title>Identification of small-molecule inhibitors of Yersinia pestis Type III secretion system YscN ATPase.</title>
        <authorList>
            <person name="Swietnicki W."/>
            <person name="Carmany D."/>
            <person name="Retford M."/>
            <person name="Guelta M."/>
            <person name="Dorsey R."/>
            <person name="Bozue J."/>
            <person name="Lee M.S."/>
            <person name="Olson M.A."/>
        </authorList>
    </citation>
    <scope>FUNCTION</scope>
    <scope>ATPASE ACTIVITY</scope>
    <scope>CATALYTIC ACTIVITY</scope>
    <scope>ACTIVITY REGULATION</scope>
    <scope>DISRUPTION PHENOTYPE</scope>
    <source>
        <strain>CO-92 / Biovar Orientalis</strain>
    </source>
</reference>
<reference key="5">
    <citation type="journal article" date="2012" name="FEMS Microbiol. Lett.">
        <title>A Yersinia pestis YscN ATPase mutant functions as a live attenuated vaccine against bubonic plague in mice.</title>
        <authorList>
            <person name="Bozue J."/>
            <person name="Cote C.K."/>
            <person name="Webster W."/>
            <person name="Bassett A."/>
            <person name="Tobery S."/>
            <person name="Little S."/>
            <person name="Swietnicki W."/>
        </authorList>
    </citation>
    <scope>DISRUPTION PHENOTYPE</scope>
    <scope>IDENTIFICATION AS A POTENTIAL VACCINE</scope>
</reference>
<proteinExistence type="evidence at protein level"/>
<name>SCTN_YERPE</name>
<dbReference type="EC" id="7.4.2.8" evidence="8"/>
<dbReference type="EMBL" id="AF053946">
    <property type="protein sequence ID" value="AAC62564.1"/>
    <property type="molecule type" value="Genomic_DNA"/>
</dbReference>
<dbReference type="EMBL" id="AF074612">
    <property type="protein sequence ID" value="AAC69791.1"/>
    <property type="molecule type" value="Genomic_DNA"/>
</dbReference>
<dbReference type="EMBL" id="AL117189">
    <property type="protein sequence ID" value="CAB54917.1"/>
    <property type="molecule type" value="Genomic_DNA"/>
</dbReference>
<dbReference type="RefSeq" id="NP_395174.1">
    <property type="nucleotide sequence ID" value="NC_003131.1"/>
</dbReference>
<dbReference type="RefSeq" id="NP_857742.1">
    <property type="nucleotide sequence ID" value="NC_004836.1"/>
</dbReference>
<dbReference type="RefSeq" id="NP_857937.1">
    <property type="nucleotide sequence ID" value="NC_004839.1"/>
</dbReference>
<dbReference type="RefSeq" id="WP_002212955.1">
    <property type="nucleotide sequence ID" value="NZ_WUCM01000070.1"/>
</dbReference>
<dbReference type="SMR" id="Q7ARI8"/>
<dbReference type="IntAct" id="Q7ARI8">
    <property type="interactions" value="5"/>
</dbReference>
<dbReference type="MINT" id="Q7ARI8"/>
<dbReference type="PaxDb" id="214092-5832460"/>
<dbReference type="DNASU" id="1149301"/>
<dbReference type="KEGG" id="ype:YPCD1.40"/>
<dbReference type="PATRIC" id="fig|214092.21.peg.51"/>
<dbReference type="eggNOG" id="COG1157">
    <property type="taxonomic scope" value="Bacteria"/>
</dbReference>
<dbReference type="HOGENOM" id="CLU_022398_5_1_6"/>
<dbReference type="OMA" id="DDGHMRA"/>
<dbReference type="OrthoDB" id="9148544at2"/>
<dbReference type="Proteomes" id="UP000000815">
    <property type="component" value="Plasmid pCD1"/>
</dbReference>
<dbReference type="GO" id="GO:0005737">
    <property type="term" value="C:cytoplasm"/>
    <property type="evidence" value="ECO:0007669"/>
    <property type="project" value="UniProtKB-SubCell"/>
</dbReference>
<dbReference type="GO" id="GO:0030257">
    <property type="term" value="C:type III protein secretion system complex"/>
    <property type="evidence" value="ECO:0007669"/>
    <property type="project" value="InterPro"/>
</dbReference>
<dbReference type="GO" id="GO:0005524">
    <property type="term" value="F:ATP binding"/>
    <property type="evidence" value="ECO:0007669"/>
    <property type="project" value="UniProtKB-KW"/>
</dbReference>
<dbReference type="GO" id="GO:0016887">
    <property type="term" value="F:ATP hydrolysis activity"/>
    <property type="evidence" value="ECO:0007669"/>
    <property type="project" value="InterPro"/>
</dbReference>
<dbReference type="GO" id="GO:0008564">
    <property type="term" value="F:protein-exporting ATPase activity"/>
    <property type="evidence" value="ECO:0007669"/>
    <property type="project" value="UniProtKB-EC"/>
</dbReference>
<dbReference type="GO" id="GO:0046961">
    <property type="term" value="F:proton-transporting ATPase activity, rotational mechanism"/>
    <property type="evidence" value="ECO:0007669"/>
    <property type="project" value="InterPro"/>
</dbReference>
<dbReference type="GO" id="GO:0030254">
    <property type="term" value="P:protein secretion by the type III secretion system"/>
    <property type="evidence" value="ECO:0007669"/>
    <property type="project" value="InterPro"/>
</dbReference>
<dbReference type="GO" id="GO:0015986">
    <property type="term" value="P:proton motive force-driven ATP synthesis"/>
    <property type="evidence" value="ECO:0007669"/>
    <property type="project" value="GOC"/>
</dbReference>
<dbReference type="CDD" id="cd18117">
    <property type="entry name" value="ATP-synt_flagellum-secretory_path_III_N"/>
    <property type="match status" value="1"/>
</dbReference>
<dbReference type="CDD" id="cd01136">
    <property type="entry name" value="ATPase_flagellum-secretory_path_III"/>
    <property type="match status" value="1"/>
</dbReference>
<dbReference type="FunFam" id="3.40.50.12240:FF:000002">
    <property type="entry name" value="Flagellum-specific ATP synthase FliI"/>
    <property type="match status" value="1"/>
</dbReference>
<dbReference type="Gene3D" id="3.40.50.12240">
    <property type="match status" value="1"/>
</dbReference>
<dbReference type="InterPro" id="IPR003593">
    <property type="entry name" value="AAA+_ATPase"/>
</dbReference>
<dbReference type="InterPro" id="IPR020003">
    <property type="entry name" value="ATPase_a/bsu_AS"/>
</dbReference>
<dbReference type="InterPro" id="IPR050053">
    <property type="entry name" value="ATPase_alpha/beta_chains"/>
</dbReference>
<dbReference type="InterPro" id="IPR004100">
    <property type="entry name" value="ATPase_F1/V1/A1_a/bsu_N"/>
</dbReference>
<dbReference type="InterPro" id="IPR000194">
    <property type="entry name" value="ATPase_F1/V1/A1_a/bsu_nucl-bd"/>
</dbReference>
<dbReference type="InterPro" id="IPR005714">
    <property type="entry name" value="ATPase_T3SS_FliI/YscN"/>
</dbReference>
<dbReference type="InterPro" id="IPR013380">
    <property type="entry name" value="ATPase_T3SS_SctN"/>
</dbReference>
<dbReference type="InterPro" id="IPR027417">
    <property type="entry name" value="P-loop_NTPase"/>
</dbReference>
<dbReference type="InterPro" id="IPR040627">
    <property type="entry name" value="T3SS_ATPase_C"/>
</dbReference>
<dbReference type="NCBIfam" id="TIGR01026">
    <property type="entry name" value="fliI_yscN"/>
    <property type="match status" value="1"/>
</dbReference>
<dbReference type="NCBIfam" id="TIGR02546">
    <property type="entry name" value="III_secr_ATP"/>
    <property type="match status" value="1"/>
</dbReference>
<dbReference type="NCBIfam" id="NF005391">
    <property type="entry name" value="PRK06936.1"/>
    <property type="match status" value="1"/>
</dbReference>
<dbReference type="PANTHER" id="PTHR15184">
    <property type="entry name" value="ATP SYNTHASE"/>
    <property type="match status" value="1"/>
</dbReference>
<dbReference type="PANTHER" id="PTHR15184:SF9">
    <property type="entry name" value="SPI-1 TYPE 3 SECRETION SYSTEM ATPASE"/>
    <property type="match status" value="1"/>
</dbReference>
<dbReference type="Pfam" id="PF00006">
    <property type="entry name" value="ATP-synt_ab"/>
    <property type="match status" value="1"/>
</dbReference>
<dbReference type="Pfam" id="PF02874">
    <property type="entry name" value="ATP-synt_ab_N"/>
    <property type="match status" value="1"/>
</dbReference>
<dbReference type="Pfam" id="PF18269">
    <property type="entry name" value="T3SS_ATPase_C"/>
    <property type="match status" value="1"/>
</dbReference>
<dbReference type="SMART" id="SM00382">
    <property type="entry name" value="AAA"/>
    <property type="match status" value="1"/>
</dbReference>
<dbReference type="SUPFAM" id="SSF52540">
    <property type="entry name" value="P-loop containing nucleoside triphosphate hydrolases"/>
    <property type="match status" value="1"/>
</dbReference>
<dbReference type="PROSITE" id="PS00152">
    <property type="entry name" value="ATPASE_ALPHA_BETA"/>
    <property type="match status" value="1"/>
</dbReference>
<geneLocation type="plasmid" evidence="10 11">
    <name>pCD1</name>
</geneLocation>
<gene>
    <name evidence="3" type="primary">sctN</name>
    <name evidence="6" type="synonym">yscN</name>
    <name evidence="10" type="ordered locus">YPCD1.40</name>
    <name evidence="9" type="ordered locus">Y0041</name>
</gene>